<sequence>MGAAVTLNRINIASGIADIRDKYMELGFNYPKYNRTVKFAEESYMYYYETSPGEIKPKFCLIDGMSIDHCSSFIVPEFAKQYVLIHGEPCSSFKFRPGTLIYYQNEVTPEYIKDLKHATDYIASGQRCHFIKKDYLLGDSDSVAKCCSKTNTKHCPKIFNNNYKTEHCDDFMTGFCRNDPGNPNCLEWLRVKRKPAMSTYSDICSKHMDARYCSEFIRIIRPDYFTFGDTALYVFCNDHKGNRNCWCANYPKSNSGDKYLGPRVCWLHECTDESRDRKWLYYNQDVQRTRCKYVGCTINVNSLALKNSQAELTSNCTRTTSTVGDIHPGEPVVKDKIKLPTWLGAAITLVVISVIFYFISIYSRPKIKTNDINVRRR</sequence>
<accession>P33841</accession>
<protein>
    <recommendedName>
        <fullName>Virion membrane protein OPG143</fullName>
    </recommendedName>
</protein>
<organism>
    <name type="scientific">Variola virus (isolate Human/India/Ind3/1967)</name>
    <name type="common">VARV</name>
    <name type="synonym">Smallpox virus</name>
    <dbReference type="NCBI Taxonomy" id="587200"/>
    <lineage>
        <taxon>Viruses</taxon>
        <taxon>Varidnaviria</taxon>
        <taxon>Bamfordvirae</taxon>
        <taxon>Nucleocytoviricota</taxon>
        <taxon>Pokkesviricetes</taxon>
        <taxon>Chitovirales</taxon>
        <taxon>Poxviridae</taxon>
        <taxon>Chordopoxvirinae</taxon>
        <taxon>Orthopoxvirus</taxon>
        <taxon>Variola virus</taxon>
    </lineage>
</organism>
<keyword id="KW-0067">ATP-binding</keyword>
<keyword id="KW-1015">Disulfide bond</keyword>
<keyword id="KW-0238">DNA-binding</keyword>
<keyword id="KW-1168">Fusion of virus membrane with host membrane</keyword>
<keyword id="KW-0347">Helicase</keyword>
<keyword id="KW-0378">Hydrolase</keyword>
<keyword id="KW-0426">Late protein</keyword>
<keyword id="KW-0449">Lipoprotein</keyword>
<keyword id="KW-0472">Membrane</keyword>
<keyword id="KW-0519">Myristate</keyword>
<keyword id="KW-0547">Nucleotide-binding</keyword>
<keyword id="KW-0597">Phosphoprotein</keyword>
<keyword id="KW-1185">Reference proteome</keyword>
<keyword id="KW-0735">Signal-anchor</keyword>
<keyword id="KW-0804">Transcription</keyword>
<keyword id="KW-0805">Transcription regulation</keyword>
<keyword id="KW-0806">Transcription termination</keyword>
<keyword id="KW-0812">Transmembrane</keyword>
<keyword id="KW-1133">Transmembrane helix</keyword>
<keyword id="KW-0261">Viral envelope protein</keyword>
<keyword id="KW-1162">Viral penetration into host cytoplasm</keyword>
<keyword id="KW-0946">Virion</keyword>
<keyword id="KW-1160">Virus entry into host cell</keyword>
<dbReference type="EMBL" id="X69198">
    <property type="protein sequence ID" value="CAA49061.1"/>
    <property type="molecule type" value="Genomic_DNA"/>
</dbReference>
<dbReference type="PIR" id="H36849">
    <property type="entry name" value="H36849"/>
</dbReference>
<dbReference type="RefSeq" id="NP_042164.1">
    <property type="nucleotide sequence ID" value="NC_001611.1"/>
</dbReference>
<dbReference type="SMR" id="P33841"/>
<dbReference type="GeneID" id="1486491"/>
<dbReference type="KEGG" id="vg:1486491"/>
<dbReference type="Proteomes" id="UP000002060">
    <property type="component" value="Segment"/>
</dbReference>
<dbReference type="GO" id="GO:0016020">
    <property type="term" value="C:membrane"/>
    <property type="evidence" value="ECO:0007669"/>
    <property type="project" value="UniProtKB-KW"/>
</dbReference>
<dbReference type="GO" id="GO:0019031">
    <property type="term" value="C:viral envelope"/>
    <property type="evidence" value="ECO:0007669"/>
    <property type="project" value="UniProtKB-KW"/>
</dbReference>
<dbReference type="GO" id="GO:0055036">
    <property type="term" value="C:virion membrane"/>
    <property type="evidence" value="ECO:0007669"/>
    <property type="project" value="UniProtKB-SubCell"/>
</dbReference>
<dbReference type="GO" id="GO:0005524">
    <property type="term" value="F:ATP binding"/>
    <property type="evidence" value="ECO:0007669"/>
    <property type="project" value="UniProtKB-KW"/>
</dbReference>
<dbReference type="GO" id="GO:0003677">
    <property type="term" value="F:DNA binding"/>
    <property type="evidence" value="ECO:0007669"/>
    <property type="project" value="UniProtKB-KW"/>
</dbReference>
<dbReference type="GO" id="GO:0004386">
    <property type="term" value="F:helicase activity"/>
    <property type="evidence" value="ECO:0007669"/>
    <property type="project" value="UniProtKB-KW"/>
</dbReference>
<dbReference type="GO" id="GO:0016787">
    <property type="term" value="F:hydrolase activity"/>
    <property type="evidence" value="ECO:0007669"/>
    <property type="project" value="UniProtKB-KW"/>
</dbReference>
<dbReference type="GO" id="GO:0006353">
    <property type="term" value="P:DNA-templated transcription termination"/>
    <property type="evidence" value="ECO:0007669"/>
    <property type="project" value="UniProtKB-KW"/>
</dbReference>
<dbReference type="GO" id="GO:0039663">
    <property type="term" value="P:membrane fusion involved in viral entry into host cell"/>
    <property type="evidence" value="ECO:0007669"/>
    <property type="project" value="UniProtKB-KW"/>
</dbReference>
<dbReference type="GO" id="GO:0046718">
    <property type="term" value="P:symbiont entry into host cell"/>
    <property type="evidence" value="ECO:0007669"/>
    <property type="project" value="UniProtKB-KW"/>
</dbReference>
<dbReference type="InterPro" id="IPR004251">
    <property type="entry name" value="Pox_virus_G9/A16"/>
</dbReference>
<dbReference type="Pfam" id="PF03003">
    <property type="entry name" value="Pox_G9-A16"/>
    <property type="match status" value="1"/>
</dbReference>
<organismHost>
    <name type="scientific">Homo sapiens</name>
    <name type="common">Human</name>
    <dbReference type="NCBI Taxonomy" id="9606"/>
</organismHost>
<reference key="1">
    <citation type="journal article" date="1993" name="FEBS Lett.">
        <title>Genes of variola and vaccinia viruses necessary to overcome the host protective mechanisms.</title>
        <authorList>
            <person name="Shchelkunov S.N."/>
            <person name="Blinov V.M."/>
            <person name="Sandakhchiev L.S."/>
        </authorList>
    </citation>
    <scope>NUCLEOTIDE SEQUENCE [LARGE SCALE GENOMIC DNA]</scope>
</reference>
<name>PG143_VAR67</name>
<comment type="function">
    <text evidence="2">Envelope protein part of the entry-fusion complex responsible for the virus membrane fusion with host cell membrane during virus entry. Also plays a role in cell-cell fusion (syncytium formation).</text>
</comment>
<comment type="subunit">
    <text evidence="2">Part of a stable entry-fusion complex (EFC) which is at least composed of proteins OPG143, OPG147, OPG155, OPG086, OPG094, OPG107, OPG104, and OPG099. Formation of the viral membrane is necessary for the assembly of the complex. Interacts with OPG094. Interacts with OPG153.</text>
</comment>
<comment type="subcellular location">
    <subcellularLocation>
        <location evidence="2">Virion membrane</location>
        <topology evidence="2">Single-pass type II membrane protein</topology>
    </subcellularLocation>
    <text evidence="2">Component of the mature virion (MV) membrane. The mature virion is located in the cytoplasm of infected cells and is probably released by cell lysis.</text>
</comment>
<comment type="induction">
    <text>Expressed in the late phase of the viral replicative cycle.</text>
</comment>
<comment type="PTM">
    <text evidence="2">Most cysteines are linked by disulfide bonds. They are created by the viral disulfide bond formation pathway, a poxvirus-specific redox pathway that operates on the cytoplasmic side of the MV membranes.</text>
</comment>
<comment type="similarity">
    <text evidence="4">Belongs to the orthopoxvirus OPG143 family.</text>
</comment>
<gene>
    <name type="primary">OPG143</name>
    <name type="ORF">A16L</name>
</gene>
<proteinExistence type="evidence at transcript level"/>
<feature type="initiator methionine" description="Removed; by host" evidence="1">
    <location>
        <position position="1"/>
    </location>
</feature>
<feature type="chain" id="PRO_0000099254" description="Virion membrane protein OPG143">
    <location>
        <begin position="2"/>
        <end position="377"/>
    </location>
</feature>
<feature type="topological domain" description="Virion surface" evidence="3">
    <location>
        <begin position="2"/>
        <end position="341"/>
    </location>
</feature>
<feature type="transmembrane region" description="Helical; Signal-anchor for type II membrane protein" evidence="3">
    <location>
        <begin position="342"/>
        <end position="362"/>
    </location>
</feature>
<feature type="topological domain" description="Intravirion" evidence="3">
    <location>
        <begin position="363"/>
        <end position="377"/>
    </location>
</feature>
<feature type="lipid moiety-binding region" description="N-myristoyl glycine; by host" evidence="1">
    <location>
        <position position="2"/>
    </location>
</feature>
<evidence type="ECO:0000250" key="1"/>
<evidence type="ECO:0000250" key="2">
    <source>
        <dbReference type="UniProtKB" id="P16710"/>
    </source>
</evidence>
<evidence type="ECO:0000255" key="3"/>
<evidence type="ECO:0000305" key="4"/>